<sequence length="353" mass="39624">MNGTEGPYFYVPMVNTSGIVRSPYEYPQYYLVNPAAYARLGAYMFLLILVGFPINFLTLYVTIEHKKLRTPLNYILLNLAVADLFMVFGGFTTTMYTSMHGYFVLGRLGCNIEGFFATLGGEIALWSLVVLAIERWVVVCKPISNFRFGENHAIMGLAFTWLMALACAAPPLVGWSRYIPEGMQCSCGIDYYTRAEGFNNESFVIYMFVCHFTVPLMVVFFCYGRLLCAVKEAAAAQQESETTQRAEREVTRMVIMMVVAFLVCWLPYASVAWWIFTHQGSEFGPVFMTIPAFFAKSSSIYNPMIYICLNKQFRHCMITTLCCGKNPFEEEEGASTASKTEASSVSSSSVSPA</sequence>
<feature type="chain" id="PRO_0000197714" description="Rhodopsin">
    <location>
        <begin position="1"/>
        <end position="353"/>
    </location>
</feature>
<feature type="topological domain" description="Extracellular" evidence="8">
    <location>
        <begin position="1"/>
        <end position="36"/>
    </location>
</feature>
<feature type="transmembrane region" description="Helical; Name=1" evidence="1">
    <location>
        <begin position="37"/>
        <end position="61"/>
    </location>
</feature>
<feature type="topological domain" description="Cytoplasmic" evidence="8">
    <location>
        <begin position="62"/>
        <end position="73"/>
    </location>
</feature>
<feature type="transmembrane region" description="Helical; Name=2" evidence="1">
    <location>
        <begin position="74"/>
        <end position="96"/>
    </location>
</feature>
<feature type="topological domain" description="Extracellular" evidence="8">
    <location>
        <begin position="97"/>
        <end position="110"/>
    </location>
</feature>
<feature type="transmembrane region" description="Helical; Name=3" evidence="1">
    <location>
        <begin position="111"/>
        <end position="133"/>
    </location>
</feature>
<feature type="topological domain" description="Cytoplasmic" evidence="8">
    <location>
        <begin position="134"/>
        <end position="152"/>
    </location>
</feature>
<feature type="transmembrane region" description="Helical; Name=4" evidence="1">
    <location>
        <begin position="153"/>
        <end position="173"/>
    </location>
</feature>
<feature type="topological domain" description="Extracellular" evidence="8">
    <location>
        <begin position="174"/>
        <end position="202"/>
    </location>
</feature>
<feature type="transmembrane region" description="Helical; Name=5" evidence="1">
    <location>
        <begin position="203"/>
        <end position="224"/>
    </location>
</feature>
<feature type="topological domain" description="Cytoplasmic" evidence="8">
    <location>
        <begin position="225"/>
        <end position="252"/>
    </location>
</feature>
<feature type="transmembrane region" description="Helical; Name=6" evidence="1">
    <location>
        <begin position="253"/>
        <end position="274"/>
    </location>
</feature>
<feature type="topological domain" description="Extracellular" evidence="8">
    <location>
        <begin position="275"/>
        <end position="286"/>
    </location>
</feature>
<feature type="transmembrane region" description="Helical; Name=7" evidence="1">
    <location>
        <begin position="287"/>
        <end position="308"/>
    </location>
</feature>
<feature type="topological domain" description="Cytoplasmic" evidence="8">
    <location>
        <begin position="309"/>
        <end position="353"/>
    </location>
</feature>
<feature type="region of interest" description="Disordered" evidence="7">
    <location>
        <begin position="331"/>
        <end position="353"/>
    </location>
</feature>
<feature type="short sequence motif" description="'Ionic lock' involved in activated form stabilization" evidence="1">
    <location>
        <begin position="134"/>
        <end position="136"/>
    </location>
</feature>
<feature type="compositionally biased region" description="Low complexity" evidence="7">
    <location>
        <begin position="334"/>
        <end position="353"/>
    </location>
</feature>
<feature type="site" description="Plays an important role in the conformation switch to the active conformation" evidence="1">
    <location>
        <position position="113"/>
    </location>
</feature>
<feature type="modified residue" description="N6-(retinylidene)lysine" evidence="1">
    <location>
        <position position="296"/>
    </location>
</feature>
<feature type="lipid moiety-binding region" description="S-palmitoyl cysteine" evidence="1">
    <location>
        <position position="322"/>
    </location>
</feature>
<feature type="lipid moiety-binding region" description="S-palmitoyl cysteine" evidence="1">
    <location>
        <position position="323"/>
    </location>
</feature>
<feature type="glycosylation site" description="N-linked (GlcNAc...) asparagine" evidence="5">
    <location>
        <position position="2"/>
    </location>
</feature>
<feature type="glycosylation site" description="N-linked (GlcNAc...) asparagine" evidence="5">
    <location>
        <position position="15"/>
    </location>
</feature>
<feature type="glycosylation site" description="N-linked (GlcNAc...) asparagine" evidence="5">
    <location>
        <position position="200"/>
    </location>
</feature>
<feature type="disulfide bond" evidence="6">
    <location>
        <begin position="110"/>
        <end position="187"/>
    </location>
</feature>
<evidence type="ECO:0000250" key="1">
    <source>
        <dbReference type="UniProtKB" id="P02699"/>
    </source>
</evidence>
<evidence type="ECO:0000250" key="2">
    <source>
        <dbReference type="UniProtKB" id="P08100"/>
    </source>
</evidence>
<evidence type="ECO:0000250" key="3">
    <source>
        <dbReference type="UniProtKB" id="P32309"/>
    </source>
</evidence>
<evidence type="ECO:0000250" key="4">
    <source>
        <dbReference type="UniProtKB" id="P35359"/>
    </source>
</evidence>
<evidence type="ECO:0000255" key="5"/>
<evidence type="ECO:0000255" key="6">
    <source>
        <dbReference type="PROSITE-ProRule" id="PRU00521"/>
    </source>
</evidence>
<evidence type="ECO:0000256" key="7">
    <source>
        <dbReference type="SAM" id="MobiDB-lite"/>
    </source>
</evidence>
<evidence type="ECO:0000305" key="8"/>
<proteinExistence type="evidence at transcript level"/>
<accession>Q9YH03</accession>
<protein>
    <recommendedName>
        <fullName>Rhodopsin</fullName>
    </recommendedName>
</protein>
<comment type="function">
    <text evidence="1 2 3">Photoreceptor required for image-forming vision at low light intensity. While most salt water fish species use retinal as chromophore, most freshwater fish use 3-dehydroretinal, or a mixture of retinal and 3-dehydroretinal (By similarity). Light-induced isomerization of 11-cis to all-trans retinal triggers a conformational change that activates signaling via G-proteins. Subsequent receptor phosphorylation mediates displacement of the bound G-protein alpha subunit by arrestin and terminates signaling (By similarity).</text>
</comment>
<comment type="subcellular location">
    <subcellularLocation>
        <location evidence="2">Membrane</location>
        <topology evidence="2">Multi-pass membrane protein</topology>
    </subcellularLocation>
    <subcellularLocation>
        <location evidence="4">Cell projection</location>
        <location evidence="4">Cilium</location>
        <location evidence="4">Photoreceptor outer segment</location>
    </subcellularLocation>
    <text evidence="2">Synthesized in the inner segment (IS) of rod photoreceptor cells before vectorial transport to disk membranes in the rod outer segment (OS) photosensory cilia.</text>
</comment>
<comment type="PTM">
    <text evidence="1">Phosphorylated on some or all of the serine and threonine residues present in the C-terminal region.</text>
</comment>
<comment type="PTM">
    <text evidence="1">Contains one covalently linked retinal chromophore.</text>
</comment>
<comment type="similarity">
    <text evidence="6">Belongs to the G-protein coupled receptor 1 family. Opsin subfamily.</text>
</comment>
<organism>
    <name type="scientific">Sarpa salpa</name>
    <name type="common">Salema</name>
    <name type="synonym">Sparus salpa</name>
    <dbReference type="NCBI Taxonomy" id="87759"/>
    <lineage>
        <taxon>Eukaryota</taxon>
        <taxon>Metazoa</taxon>
        <taxon>Chordata</taxon>
        <taxon>Craniata</taxon>
        <taxon>Vertebrata</taxon>
        <taxon>Euteleostomi</taxon>
        <taxon>Actinopterygii</taxon>
        <taxon>Neopterygii</taxon>
        <taxon>Teleostei</taxon>
        <taxon>Neoteleostei</taxon>
        <taxon>Acanthomorphata</taxon>
        <taxon>Eupercaria</taxon>
        <taxon>Spariformes</taxon>
        <taxon>Sparidae</taxon>
        <taxon>Sarpa</taxon>
    </lineage>
</organism>
<dbReference type="EMBL" id="Y18664">
    <property type="protein sequence ID" value="CAA77246.1"/>
    <property type="molecule type" value="mRNA"/>
</dbReference>
<dbReference type="SMR" id="Q9YH03"/>
<dbReference type="GlyCosmos" id="Q9YH03">
    <property type="glycosylation" value="3 sites, No reported glycans"/>
</dbReference>
<dbReference type="GO" id="GO:0016020">
    <property type="term" value="C:membrane"/>
    <property type="evidence" value="ECO:0000250"/>
    <property type="project" value="UniProtKB"/>
</dbReference>
<dbReference type="GO" id="GO:0097381">
    <property type="term" value="C:photoreceptor disc membrane"/>
    <property type="evidence" value="ECO:0000250"/>
    <property type="project" value="UniProtKB"/>
</dbReference>
<dbReference type="GO" id="GO:0005886">
    <property type="term" value="C:plasma membrane"/>
    <property type="evidence" value="ECO:0000250"/>
    <property type="project" value="UniProtKB"/>
</dbReference>
<dbReference type="GO" id="GO:0005502">
    <property type="term" value="F:11-cis retinal binding"/>
    <property type="evidence" value="ECO:0000250"/>
    <property type="project" value="UniProtKB"/>
</dbReference>
<dbReference type="GO" id="GO:0008020">
    <property type="term" value="F:G protein-coupled photoreceptor activity"/>
    <property type="evidence" value="ECO:0000250"/>
    <property type="project" value="UniProtKB"/>
</dbReference>
<dbReference type="GO" id="GO:0016038">
    <property type="term" value="P:absorption of visible light"/>
    <property type="evidence" value="ECO:0000250"/>
    <property type="project" value="UniProtKB"/>
</dbReference>
<dbReference type="GO" id="GO:0016056">
    <property type="term" value="P:G protein-coupled opsin signaling pathway"/>
    <property type="evidence" value="ECO:0000250"/>
    <property type="project" value="UniProtKB"/>
</dbReference>
<dbReference type="GO" id="GO:0007601">
    <property type="term" value="P:visual perception"/>
    <property type="evidence" value="ECO:0007669"/>
    <property type="project" value="UniProtKB-KW"/>
</dbReference>
<dbReference type="CDD" id="cd15080">
    <property type="entry name" value="7tmA_MWS_opsin"/>
    <property type="match status" value="1"/>
</dbReference>
<dbReference type="FunFam" id="1.20.1070.10:FF:000018">
    <property type="entry name" value="Rhodopsin"/>
    <property type="match status" value="1"/>
</dbReference>
<dbReference type="Gene3D" id="1.20.1070.10">
    <property type="entry name" value="Rhodopsin 7-helix transmembrane proteins"/>
    <property type="match status" value="1"/>
</dbReference>
<dbReference type="InterPro" id="IPR050125">
    <property type="entry name" value="GPCR_opsins"/>
</dbReference>
<dbReference type="InterPro" id="IPR000276">
    <property type="entry name" value="GPCR_Rhodpsn"/>
</dbReference>
<dbReference type="InterPro" id="IPR017452">
    <property type="entry name" value="GPCR_Rhodpsn_7TM"/>
</dbReference>
<dbReference type="InterPro" id="IPR001760">
    <property type="entry name" value="Opsin"/>
</dbReference>
<dbReference type="InterPro" id="IPR027430">
    <property type="entry name" value="Retinal_BS"/>
</dbReference>
<dbReference type="InterPro" id="IPR000732">
    <property type="entry name" value="Rhodopsin"/>
</dbReference>
<dbReference type="InterPro" id="IPR019477">
    <property type="entry name" value="Rhodopsin_N"/>
</dbReference>
<dbReference type="PANTHER" id="PTHR24240">
    <property type="entry name" value="OPSIN"/>
    <property type="match status" value="1"/>
</dbReference>
<dbReference type="Pfam" id="PF00001">
    <property type="entry name" value="7tm_1"/>
    <property type="match status" value="1"/>
</dbReference>
<dbReference type="Pfam" id="PF10413">
    <property type="entry name" value="Rhodopsin_N"/>
    <property type="match status" value="1"/>
</dbReference>
<dbReference type="PRINTS" id="PR00237">
    <property type="entry name" value="GPCRRHODOPSN"/>
</dbReference>
<dbReference type="PRINTS" id="PR00238">
    <property type="entry name" value="OPSIN"/>
</dbReference>
<dbReference type="PRINTS" id="PR00579">
    <property type="entry name" value="RHODOPSIN"/>
</dbReference>
<dbReference type="SUPFAM" id="SSF81321">
    <property type="entry name" value="Family A G protein-coupled receptor-like"/>
    <property type="match status" value="1"/>
</dbReference>
<dbReference type="PROSITE" id="PS00237">
    <property type="entry name" value="G_PROTEIN_RECEP_F1_1"/>
    <property type="match status" value="1"/>
</dbReference>
<dbReference type="PROSITE" id="PS50262">
    <property type="entry name" value="G_PROTEIN_RECEP_F1_2"/>
    <property type="match status" value="1"/>
</dbReference>
<dbReference type="PROSITE" id="PS00238">
    <property type="entry name" value="OPSIN"/>
    <property type="match status" value="1"/>
</dbReference>
<name>OPSD_SARSL</name>
<reference key="1">
    <citation type="submission" date="1999-01" db="EMBL/GenBank/DDBJ databases">
        <title>Comparative analysis of opsins in Mediterranian coastal fish.</title>
        <authorList>
            <person name="Archer S.N."/>
            <person name="Hirano J."/>
        </authorList>
    </citation>
    <scope>NUCLEOTIDE SEQUENCE [MRNA]</scope>
    <source>
        <tissue>Retina</tissue>
    </source>
</reference>
<keyword id="KW-0966">Cell projection</keyword>
<keyword id="KW-0157">Chromophore</keyword>
<keyword id="KW-1015">Disulfide bond</keyword>
<keyword id="KW-0297">G-protein coupled receptor</keyword>
<keyword id="KW-0325">Glycoprotein</keyword>
<keyword id="KW-0449">Lipoprotein</keyword>
<keyword id="KW-0472">Membrane</keyword>
<keyword id="KW-0564">Palmitate</keyword>
<keyword id="KW-0597">Phosphoprotein</keyword>
<keyword id="KW-0600">Photoreceptor protein</keyword>
<keyword id="KW-0675">Receptor</keyword>
<keyword id="KW-0681">Retinal protein</keyword>
<keyword id="KW-0716">Sensory transduction</keyword>
<keyword id="KW-0807">Transducer</keyword>
<keyword id="KW-0812">Transmembrane</keyword>
<keyword id="KW-1133">Transmembrane helix</keyword>
<keyword id="KW-0844">Vision</keyword>
<gene>
    <name type="primary">rho</name>
</gene>